<comment type="function">
    <text evidence="1">Removes the pyruvyl group from chorismate, with concomitant aromatization of the ring, to provide 4-hydroxybenzoate (4HB) for the ubiquinone pathway.</text>
</comment>
<comment type="catalytic activity">
    <reaction evidence="1">
        <text>chorismate = 4-hydroxybenzoate + pyruvate</text>
        <dbReference type="Rhea" id="RHEA:16505"/>
        <dbReference type="ChEBI" id="CHEBI:15361"/>
        <dbReference type="ChEBI" id="CHEBI:17879"/>
        <dbReference type="ChEBI" id="CHEBI:29748"/>
        <dbReference type="EC" id="4.1.3.40"/>
    </reaction>
</comment>
<comment type="pathway">
    <text evidence="1">Cofactor biosynthesis; ubiquinone biosynthesis.</text>
</comment>
<comment type="subunit">
    <text evidence="1">Monomer.</text>
</comment>
<comment type="subcellular location">
    <subcellularLocation>
        <location evidence="1">Cytoplasm</location>
    </subcellularLocation>
</comment>
<comment type="similarity">
    <text evidence="1">Belongs to the UbiC family.</text>
</comment>
<proteinExistence type="inferred from homology"/>
<feature type="chain" id="PRO_1000186523" description="Chorismate pyruvate-lyase">
    <location>
        <begin position="1"/>
        <end position="165"/>
    </location>
</feature>
<feature type="binding site" evidence="1">
    <location>
        <position position="35"/>
    </location>
    <ligand>
        <name>substrate</name>
    </ligand>
</feature>
<feature type="binding site" evidence="1">
    <location>
        <position position="77"/>
    </location>
    <ligand>
        <name>substrate</name>
    </ligand>
</feature>
<feature type="binding site" evidence="1">
    <location>
        <position position="115"/>
    </location>
    <ligand>
        <name>substrate</name>
    </ligand>
</feature>
<feature type="binding site" evidence="1">
    <location>
        <position position="156"/>
    </location>
    <ligand>
        <name>substrate</name>
    </ligand>
</feature>
<dbReference type="EC" id="4.1.3.40" evidence="1"/>
<dbReference type="EMBL" id="CU928160">
    <property type="protein sequence ID" value="CAR01018.1"/>
    <property type="molecule type" value="Genomic_DNA"/>
</dbReference>
<dbReference type="RefSeq" id="WP_001297295.1">
    <property type="nucleotide sequence ID" value="NC_011741.1"/>
</dbReference>
<dbReference type="SMR" id="B7M7V2"/>
<dbReference type="GeneID" id="75204183"/>
<dbReference type="KEGG" id="ecr:ECIAI1_4269"/>
<dbReference type="HOGENOM" id="CLU_096824_1_0_6"/>
<dbReference type="UniPathway" id="UPA00232"/>
<dbReference type="GO" id="GO:0005829">
    <property type="term" value="C:cytosol"/>
    <property type="evidence" value="ECO:0007669"/>
    <property type="project" value="TreeGrafter"/>
</dbReference>
<dbReference type="GO" id="GO:0008813">
    <property type="term" value="F:chorismate lyase activity"/>
    <property type="evidence" value="ECO:0007669"/>
    <property type="project" value="UniProtKB-UniRule"/>
</dbReference>
<dbReference type="GO" id="GO:0042866">
    <property type="term" value="P:pyruvate biosynthetic process"/>
    <property type="evidence" value="ECO:0007669"/>
    <property type="project" value="UniProtKB-UniRule"/>
</dbReference>
<dbReference type="GO" id="GO:0006744">
    <property type="term" value="P:ubiquinone biosynthetic process"/>
    <property type="evidence" value="ECO:0007669"/>
    <property type="project" value="UniProtKB-UniRule"/>
</dbReference>
<dbReference type="FunFam" id="3.40.1410.10:FF:000002">
    <property type="entry name" value="Chorismate pyruvate-lyase"/>
    <property type="match status" value="1"/>
</dbReference>
<dbReference type="Gene3D" id="3.40.1410.10">
    <property type="entry name" value="Chorismate lyase-like"/>
    <property type="match status" value="1"/>
</dbReference>
<dbReference type="HAMAP" id="MF_01632">
    <property type="entry name" value="UbiC"/>
    <property type="match status" value="1"/>
</dbReference>
<dbReference type="InterPro" id="IPR007440">
    <property type="entry name" value="Chorismate--pyruvate_lyase"/>
</dbReference>
<dbReference type="InterPro" id="IPR028978">
    <property type="entry name" value="Chorismate_lyase_/UTRA_dom_sf"/>
</dbReference>
<dbReference type="NCBIfam" id="NF008656">
    <property type="entry name" value="PRK11655.1"/>
    <property type="match status" value="1"/>
</dbReference>
<dbReference type="PANTHER" id="PTHR38683">
    <property type="entry name" value="CHORISMATE PYRUVATE-LYASE"/>
    <property type="match status" value="1"/>
</dbReference>
<dbReference type="PANTHER" id="PTHR38683:SF1">
    <property type="entry name" value="CHORISMATE PYRUVATE-LYASE"/>
    <property type="match status" value="1"/>
</dbReference>
<dbReference type="Pfam" id="PF04345">
    <property type="entry name" value="Chor_lyase"/>
    <property type="match status" value="1"/>
</dbReference>
<dbReference type="SUPFAM" id="SSF64288">
    <property type="entry name" value="Chorismate lyase-like"/>
    <property type="match status" value="1"/>
</dbReference>
<organism>
    <name type="scientific">Escherichia coli O8 (strain IAI1)</name>
    <dbReference type="NCBI Taxonomy" id="585034"/>
    <lineage>
        <taxon>Bacteria</taxon>
        <taxon>Pseudomonadati</taxon>
        <taxon>Pseudomonadota</taxon>
        <taxon>Gammaproteobacteria</taxon>
        <taxon>Enterobacterales</taxon>
        <taxon>Enterobacteriaceae</taxon>
        <taxon>Escherichia</taxon>
    </lineage>
</organism>
<name>UBIC_ECO8A</name>
<evidence type="ECO:0000255" key="1">
    <source>
        <dbReference type="HAMAP-Rule" id="MF_01632"/>
    </source>
</evidence>
<gene>
    <name evidence="1" type="primary">ubiC</name>
    <name type="ordered locus">ECIAI1_4269</name>
</gene>
<keyword id="KW-0963">Cytoplasm</keyword>
<keyword id="KW-0456">Lyase</keyword>
<keyword id="KW-0670">Pyruvate</keyword>
<keyword id="KW-0831">Ubiquinone biosynthesis</keyword>
<sequence length="165" mass="18835">MSHPALTQLRALRYFKEIPALEPQLLDWLLLEDSMTKRFEQQGKTVSVTMIREGFVEQNEIPEELPLLPKESRYWLREILLCADGEPWLAGRTVVPVSTLSGPELALQKLGKTPLGRYLFTSSTLTRDFIEIGRDAGLWGRRSRLRLSGKPLLLTELFLPASPLY</sequence>
<reference key="1">
    <citation type="journal article" date="2009" name="PLoS Genet.">
        <title>Organised genome dynamics in the Escherichia coli species results in highly diverse adaptive paths.</title>
        <authorList>
            <person name="Touchon M."/>
            <person name="Hoede C."/>
            <person name="Tenaillon O."/>
            <person name="Barbe V."/>
            <person name="Baeriswyl S."/>
            <person name="Bidet P."/>
            <person name="Bingen E."/>
            <person name="Bonacorsi S."/>
            <person name="Bouchier C."/>
            <person name="Bouvet O."/>
            <person name="Calteau A."/>
            <person name="Chiapello H."/>
            <person name="Clermont O."/>
            <person name="Cruveiller S."/>
            <person name="Danchin A."/>
            <person name="Diard M."/>
            <person name="Dossat C."/>
            <person name="Karoui M.E."/>
            <person name="Frapy E."/>
            <person name="Garry L."/>
            <person name="Ghigo J.M."/>
            <person name="Gilles A.M."/>
            <person name="Johnson J."/>
            <person name="Le Bouguenec C."/>
            <person name="Lescat M."/>
            <person name="Mangenot S."/>
            <person name="Martinez-Jehanne V."/>
            <person name="Matic I."/>
            <person name="Nassif X."/>
            <person name="Oztas S."/>
            <person name="Petit M.A."/>
            <person name="Pichon C."/>
            <person name="Rouy Z."/>
            <person name="Ruf C.S."/>
            <person name="Schneider D."/>
            <person name="Tourret J."/>
            <person name="Vacherie B."/>
            <person name="Vallenet D."/>
            <person name="Medigue C."/>
            <person name="Rocha E.P.C."/>
            <person name="Denamur E."/>
        </authorList>
    </citation>
    <scope>NUCLEOTIDE SEQUENCE [LARGE SCALE GENOMIC DNA]</scope>
    <source>
        <strain>IAI1</strain>
    </source>
</reference>
<protein>
    <recommendedName>
        <fullName evidence="1">Chorismate pyruvate-lyase</fullName>
        <shortName evidence="1">CL</shortName>
        <shortName evidence="1">CPL</shortName>
        <ecNumber evidence="1">4.1.3.40</ecNumber>
    </recommendedName>
</protein>
<accession>B7M7V2</accession>